<accession>Q2JR95</accession>
<name>PSBI_SYNJA</name>
<organism>
    <name type="scientific">Synechococcus sp. (strain JA-3-3Ab)</name>
    <name type="common">Cyanobacteria bacterium Yellowstone A-Prime</name>
    <dbReference type="NCBI Taxonomy" id="321327"/>
    <lineage>
        <taxon>Bacteria</taxon>
        <taxon>Bacillati</taxon>
        <taxon>Cyanobacteriota</taxon>
        <taxon>Cyanophyceae</taxon>
        <taxon>Synechococcales</taxon>
        <taxon>Synechococcaceae</taxon>
        <taxon>Synechococcus</taxon>
    </lineage>
</organism>
<dbReference type="EMBL" id="CP000239">
    <property type="protein sequence ID" value="ABD00868.1"/>
    <property type="molecule type" value="Genomic_DNA"/>
</dbReference>
<dbReference type="RefSeq" id="WP_011431538.1">
    <property type="nucleotide sequence ID" value="NC_007775.1"/>
</dbReference>
<dbReference type="SMR" id="Q2JR95"/>
<dbReference type="STRING" id="321327.CYA_2765"/>
<dbReference type="KEGG" id="cya:CYA_2765"/>
<dbReference type="eggNOG" id="ENOG5033CII">
    <property type="taxonomic scope" value="Bacteria"/>
</dbReference>
<dbReference type="HOGENOM" id="CLU_212150_0_0_3"/>
<dbReference type="Proteomes" id="UP000008818">
    <property type="component" value="Chromosome"/>
</dbReference>
<dbReference type="GO" id="GO:0009539">
    <property type="term" value="C:photosystem II reaction center"/>
    <property type="evidence" value="ECO:0007669"/>
    <property type="project" value="InterPro"/>
</dbReference>
<dbReference type="GO" id="GO:0031676">
    <property type="term" value="C:plasma membrane-derived thylakoid membrane"/>
    <property type="evidence" value="ECO:0007669"/>
    <property type="project" value="UniProtKB-SubCell"/>
</dbReference>
<dbReference type="GO" id="GO:0015979">
    <property type="term" value="P:photosynthesis"/>
    <property type="evidence" value="ECO:0007669"/>
    <property type="project" value="UniProtKB-UniRule"/>
</dbReference>
<dbReference type="HAMAP" id="MF_01316">
    <property type="entry name" value="PSII_PsbI"/>
    <property type="match status" value="1"/>
</dbReference>
<dbReference type="InterPro" id="IPR003686">
    <property type="entry name" value="PSII_PsbI"/>
</dbReference>
<dbReference type="InterPro" id="IPR037271">
    <property type="entry name" value="PSII_PsbI_sf"/>
</dbReference>
<dbReference type="NCBIfam" id="NF002735">
    <property type="entry name" value="PRK02655.1"/>
    <property type="match status" value="1"/>
</dbReference>
<dbReference type="PANTHER" id="PTHR35772">
    <property type="entry name" value="PHOTOSYSTEM II REACTION CENTER PROTEIN I"/>
    <property type="match status" value="1"/>
</dbReference>
<dbReference type="PANTHER" id="PTHR35772:SF1">
    <property type="entry name" value="PHOTOSYSTEM II REACTION CENTER PROTEIN I"/>
    <property type="match status" value="1"/>
</dbReference>
<dbReference type="Pfam" id="PF02532">
    <property type="entry name" value="PsbI"/>
    <property type="match status" value="1"/>
</dbReference>
<dbReference type="SUPFAM" id="SSF161041">
    <property type="entry name" value="Photosystem II reaction center protein I, PsbI"/>
    <property type="match status" value="1"/>
</dbReference>
<protein>
    <recommendedName>
        <fullName evidence="1">Photosystem II reaction center protein I</fullName>
        <shortName evidence="1">PSII-I</shortName>
    </recommendedName>
    <alternativeName>
        <fullName evidence="1">PSII 4.4 kDa protein</fullName>
    </alternativeName>
</protein>
<comment type="function">
    <text evidence="1">One of the components of the core complex of photosystem II (PSII), required for its stability and/or assembly. PSII is a light-driven water:plastoquinone oxidoreductase that uses light energy to abstract electrons from H(2)O, generating O(2) and a proton gradient subsequently used for ATP formation. It consists of a core antenna complex that captures photons, and an electron transfer chain that converts photonic excitation into a charge separation.</text>
</comment>
<comment type="subunit">
    <text evidence="1">PSII is composed of 1 copy each of membrane proteins PsbA, PsbB, PsbC, PsbD, PsbE, PsbF, PsbH, PsbI, PsbJ, PsbK, PsbL, PsbM, PsbT, PsbX, PsbY, PsbZ, Psb30/Ycf12, peripheral proteins PsbO, CyanoQ (PsbQ), PsbU, PsbV and a large number of cofactors. It forms dimeric complexes.</text>
</comment>
<comment type="subcellular location">
    <subcellularLocation>
        <location evidence="1">Cellular thylakoid membrane</location>
        <topology evidence="1">Single-pass membrane protein</topology>
    </subcellularLocation>
</comment>
<comment type="similarity">
    <text evidence="1">Belongs to the PsbI family.</text>
</comment>
<keyword id="KW-0472">Membrane</keyword>
<keyword id="KW-0602">Photosynthesis</keyword>
<keyword id="KW-0604">Photosystem II</keyword>
<keyword id="KW-0674">Reaction center</keyword>
<keyword id="KW-0793">Thylakoid</keyword>
<keyword id="KW-0812">Transmembrane</keyword>
<keyword id="KW-1133">Transmembrane helix</keyword>
<reference key="1">
    <citation type="journal article" date="2007" name="ISME J.">
        <title>Population level functional diversity in a microbial community revealed by comparative genomic and metagenomic analyses.</title>
        <authorList>
            <person name="Bhaya D."/>
            <person name="Grossman A.R."/>
            <person name="Steunou A.-S."/>
            <person name="Khuri N."/>
            <person name="Cohan F.M."/>
            <person name="Hamamura N."/>
            <person name="Melendrez M.C."/>
            <person name="Bateson M.M."/>
            <person name="Ward D.M."/>
            <person name="Heidelberg J.F."/>
        </authorList>
    </citation>
    <scope>NUCLEOTIDE SEQUENCE [LARGE SCALE GENOMIC DNA]</scope>
    <source>
        <strain>JA-3-3Ab</strain>
    </source>
</reference>
<gene>
    <name evidence="1" type="primary">psbI</name>
    <name type="ordered locus">CYA_2765</name>
</gene>
<feature type="chain" id="PRO_0000298306" description="Photosystem II reaction center protein I">
    <location>
        <begin position="1"/>
        <end position="38"/>
    </location>
</feature>
<feature type="transmembrane region" description="Helical" evidence="1">
    <location>
        <begin position="1"/>
        <end position="21"/>
    </location>
</feature>
<evidence type="ECO:0000255" key="1">
    <source>
        <dbReference type="HAMAP-Rule" id="MF_01316"/>
    </source>
</evidence>
<sequence length="38" mass="4390">MLLLKISVYAVVIFFVGLFVFGFLSNDPARNPNRRDME</sequence>
<proteinExistence type="inferred from homology"/>